<gene>
    <name evidence="1" type="primary">pnp</name>
    <name type="ordered locus">BLD_1664</name>
</gene>
<proteinExistence type="inferred from homology"/>
<protein>
    <recommendedName>
        <fullName evidence="1">Polyribonucleotide nucleotidyltransferase</fullName>
        <ecNumber evidence="1">2.7.7.8</ecNumber>
    </recommendedName>
    <alternativeName>
        <fullName evidence="1">Polynucleotide phosphorylase</fullName>
        <shortName evidence="1">PNPase</shortName>
    </alternativeName>
</protein>
<sequence length="913" mass="101847">MEGPEIKAVEAVIDNGSFGKRTLRFETGRLAQQADGAVAAYLDDDSMILSTTTAGSSPKENYDFFPLTVDVEEKMYAAGKIPGSFFRREGRPSSEAILACRIIDRPLRPLFPHTLRNEVQVVETVLAVNPDDAYDVIALNAASASTMISGLPFEGPVSGVRLALIDGQWVAFPRWSERERAVFEIVVAGRVIENGDVAIAMIEAGAGKNAWHLIYDEGQTKPDEEVVAGGLEAAKPFIKVICEAQDELKKIAAKETKEFQLFPEYTDELYARIDEIAHKDLDEALSIAEKLPRQDRIHEIKEHVREVLADEFTDMDDAEKDKELGNAFKELQRQIVRRRILTEDYRIDGRGLRDIRTLSAEVDIVPRVHGSALFQRGETQILGVTTLNMLKMEQQIDALSGPQSKRYMHNYEMPPYSTGETGRVGSPKRREIGHGALAEKALVPVLPSREEFPYAIRQVSEAIGSNGSTSMGSVCASTLSLLAAGVPLKAPVAGIAMGLVSGDVDGKHIFKTLTDILGAEDAFGDMDFKVAGTSEFITALQLDTKLDGIPADILAAALQQAKEARATILEVINECIDGPAEMSEFAPRIITTSVPVEKIGEVIGPKGKMINQIQEDTGAEIAIEDDGTVFISSEGGEAAEKAKAIIDQIANPHVPEAGETYNGKVVKTTSFGAFVNLTPGTDGLLHISQIRNLANGERIDAVEDVLKEGDTVEVIVQGVDDRGKISLAIPGFEDQENNARPSRGDRDDRRGGRGRGDRDDRRGGRGRRSERDDRDFDDRDDRPRRRRSDDFEDDYDDRPRRRRSDDRDFDRDDRDDDRPRRRRSADRDFDDRDDRDARDSRDDDRPRRRRSSDRDDRGDRDDRRGGSRGRGRGSDRNPRYATDDNYDDYRADREERTERPRRRVRRDFDPFED</sequence>
<keyword id="KW-0963">Cytoplasm</keyword>
<keyword id="KW-0460">Magnesium</keyword>
<keyword id="KW-0479">Metal-binding</keyword>
<keyword id="KW-0548">Nucleotidyltransferase</keyword>
<keyword id="KW-0694">RNA-binding</keyword>
<keyword id="KW-0808">Transferase</keyword>
<comment type="function">
    <text evidence="1">Involved in mRNA degradation. Catalyzes the phosphorolysis of single-stranded polyribonucleotides processively in the 3'- to 5'-direction.</text>
</comment>
<comment type="catalytic activity">
    <reaction evidence="1">
        <text>RNA(n+1) + phosphate = RNA(n) + a ribonucleoside 5'-diphosphate</text>
        <dbReference type="Rhea" id="RHEA:22096"/>
        <dbReference type="Rhea" id="RHEA-COMP:14527"/>
        <dbReference type="Rhea" id="RHEA-COMP:17342"/>
        <dbReference type="ChEBI" id="CHEBI:43474"/>
        <dbReference type="ChEBI" id="CHEBI:57930"/>
        <dbReference type="ChEBI" id="CHEBI:140395"/>
        <dbReference type="EC" id="2.7.7.8"/>
    </reaction>
</comment>
<comment type="cofactor">
    <cofactor evidence="1">
        <name>Mg(2+)</name>
        <dbReference type="ChEBI" id="CHEBI:18420"/>
    </cofactor>
</comment>
<comment type="subcellular location">
    <subcellularLocation>
        <location evidence="1">Cytoplasm</location>
    </subcellularLocation>
</comment>
<comment type="similarity">
    <text evidence="1">Belongs to the polyribonucleotide nucleotidyltransferase family.</text>
</comment>
<organism>
    <name type="scientific">Bifidobacterium longum (strain DJO10A)</name>
    <dbReference type="NCBI Taxonomy" id="205913"/>
    <lineage>
        <taxon>Bacteria</taxon>
        <taxon>Bacillati</taxon>
        <taxon>Actinomycetota</taxon>
        <taxon>Actinomycetes</taxon>
        <taxon>Bifidobacteriales</taxon>
        <taxon>Bifidobacteriaceae</taxon>
        <taxon>Bifidobacterium</taxon>
    </lineage>
</organism>
<name>PNP_BIFLD</name>
<feature type="chain" id="PRO_1000147888" description="Polyribonucleotide nucleotidyltransferase">
    <location>
        <begin position="1"/>
        <end position="913"/>
    </location>
</feature>
<feature type="domain" description="KH" evidence="1">
    <location>
        <begin position="587"/>
        <end position="646"/>
    </location>
</feature>
<feature type="domain" description="S1 motif" evidence="1">
    <location>
        <begin position="658"/>
        <end position="730"/>
    </location>
</feature>
<feature type="region of interest" description="Disordered" evidence="2">
    <location>
        <begin position="407"/>
        <end position="427"/>
    </location>
</feature>
<feature type="region of interest" description="Disordered" evidence="2">
    <location>
        <begin position="727"/>
        <end position="913"/>
    </location>
</feature>
<feature type="compositionally biased region" description="Basic and acidic residues" evidence="2">
    <location>
        <begin position="742"/>
        <end position="789"/>
    </location>
</feature>
<feature type="compositionally biased region" description="Basic and acidic residues" evidence="2">
    <location>
        <begin position="797"/>
        <end position="865"/>
    </location>
</feature>
<feature type="compositionally biased region" description="Basic and acidic residues" evidence="2">
    <location>
        <begin position="872"/>
        <end position="898"/>
    </location>
</feature>
<feature type="binding site" evidence="1">
    <location>
        <position position="521"/>
    </location>
    <ligand>
        <name>Mg(2+)</name>
        <dbReference type="ChEBI" id="CHEBI:18420"/>
    </ligand>
</feature>
<feature type="binding site" evidence="1">
    <location>
        <position position="527"/>
    </location>
    <ligand>
        <name>Mg(2+)</name>
        <dbReference type="ChEBI" id="CHEBI:18420"/>
    </ligand>
</feature>
<accession>B3DPX0</accession>
<evidence type="ECO:0000255" key="1">
    <source>
        <dbReference type="HAMAP-Rule" id="MF_01595"/>
    </source>
</evidence>
<evidence type="ECO:0000256" key="2">
    <source>
        <dbReference type="SAM" id="MobiDB-lite"/>
    </source>
</evidence>
<dbReference type="EC" id="2.7.7.8" evidence="1"/>
<dbReference type="EMBL" id="CP000605">
    <property type="protein sequence ID" value="ACD99109.1"/>
    <property type="molecule type" value="Genomic_DNA"/>
</dbReference>
<dbReference type="RefSeq" id="WP_010081538.1">
    <property type="nucleotide sequence ID" value="NZ_AABM02000021.1"/>
</dbReference>
<dbReference type="SMR" id="B3DPX0"/>
<dbReference type="KEGG" id="blj:BLD_1664"/>
<dbReference type="HOGENOM" id="CLU_004217_1_0_11"/>
<dbReference type="Proteomes" id="UP000002419">
    <property type="component" value="Chromosome"/>
</dbReference>
<dbReference type="GO" id="GO:0005829">
    <property type="term" value="C:cytosol"/>
    <property type="evidence" value="ECO:0007669"/>
    <property type="project" value="TreeGrafter"/>
</dbReference>
<dbReference type="GO" id="GO:0000175">
    <property type="term" value="F:3'-5'-RNA exonuclease activity"/>
    <property type="evidence" value="ECO:0007669"/>
    <property type="project" value="TreeGrafter"/>
</dbReference>
<dbReference type="GO" id="GO:0000287">
    <property type="term" value="F:magnesium ion binding"/>
    <property type="evidence" value="ECO:0007669"/>
    <property type="project" value="UniProtKB-UniRule"/>
</dbReference>
<dbReference type="GO" id="GO:0004654">
    <property type="term" value="F:polyribonucleotide nucleotidyltransferase activity"/>
    <property type="evidence" value="ECO:0007669"/>
    <property type="project" value="UniProtKB-UniRule"/>
</dbReference>
<dbReference type="GO" id="GO:0003723">
    <property type="term" value="F:RNA binding"/>
    <property type="evidence" value="ECO:0007669"/>
    <property type="project" value="UniProtKB-UniRule"/>
</dbReference>
<dbReference type="GO" id="GO:0006402">
    <property type="term" value="P:mRNA catabolic process"/>
    <property type="evidence" value="ECO:0007669"/>
    <property type="project" value="UniProtKB-UniRule"/>
</dbReference>
<dbReference type="GO" id="GO:0006396">
    <property type="term" value="P:RNA processing"/>
    <property type="evidence" value="ECO:0007669"/>
    <property type="project" value="InterPro"/>
</dbReference>
<dbReference type="CDD" id="cd02393">
    <property type="entry name" value="KH-I_PNPase"/>
    <property type="match status" value="1"/>
</dbReference>
<dbReference type="CDD" id="cd11364">
    <property type="entry name" value="RNase_PH_PNPase_2"/>
    <property type="match status" value="1"/>
</dbReference>
<dbReference type="CDD" id="cd04472">
    <property type="entry name" value="S1_PNPase"/>
    <property type="match status" value="1"/>
</dbReference>
<dbReference type="FunFam" id="3.30.1370.10:FF:000001">
    <property type="entry name" value="Polyribonucleotide nucleotidyltransferase"/>
    <property type="match status" value="1"/>
</dbReference>
<dbReference type="FunFam" id="3.30.230.70:FF:000001">
    <property type="entry name" value="Polyribonucleotide nucleotidyltransferase"/>
    <property type="match status" value="1"/>
</dbReference>
<dbReference type="FunFam" id="3.30.230.70:FF:000002">
    <property type="entry name" value="Polyribonucleotide nucleotidyltransferase"/>
    <property type="match status" value="1"/>
</dbReference>
<dbReference type="Gene3D" id="3.30.230.70">
    <property type="entry name" value="GHMP Kinase, N-terminal domain"/>
    <property type="match status" value="2"/>
</dbReference>
<dbReference type="Gene3D" id="3.30.1370.10">
    <property type="entry name" value="K Homology domain, type 1"/>
    <property type="match status" value="1"/>
</dbReference>
<dbReference type="Gene3D" id="2.40.50.140">
    <property type="entry name" value="Nucleic acid-binding proteins"/>
    <property type="match status" value="1"/>
</dbReference>
<dbReference type="HAMAP" id="MF_01595">
    <property type="entry name" value="PNPase"/>
    <property type="match status" value="1"/>
</dbReference>
<dbReference type="InterPro" id="IPR001247">
    <property type="entry name" value="ExoRNase_PH_dom1"/>
</dbReference>
<dbReference type="InterPro" id="IPR036345">
    <property type="entry name" value="ExoRNase_PH_dom2_sf"/>
</dbReference>
<dbReference type="InterPro" id="IPR014069">
    <property type="entry name" value="GPSI/PNP"/>
</dbReference>
<dbReference type="InterPro" id="IPR004087">
    <property type="entry name" value="KH_dom"/>
</dbReference>
<dbReference type="InterPro" id="IPR004088">
    <property type="entry name" value="KH_dom_type_1"/>
</dbReference>
<dbReference type="InterPro" id="IPR036612">
    <property type="entry name" value="KH_dom_type_1_sf"/>
</dbReference>
<dbReference type="InterPro" id="IPR012340">
    <property type="entry name" value="NA-bd_OB-fold"/>
</dbReference>
<dbReference type="InterPro" id="IPR012162">
    <property type="entry name" value="PNPase"/>
</dbReference>
<dbReference type="InterPro" id="IPR027408">
    <property type="entry name" value="PNPase/RNase_PH_dom_sf"/>
</dbReference>
<dbReference type="InterPro" id="IPR015848">
    <property type="entry name" value="PNPase_PH_RNA-bd_bac/org-type"/>
</dbReference>
<dbReference type="InterPro" id="IPR036456">
    <property type="entry name" value="PNPase_PH_RNA-bd_sf"/>
</dbReference>
<dbReference type="InterPro" id="IPR020568">
    <property type="entry name" value="Ribosomal_Su5_D2-typ_SF"/>
</dbReference>
<dbReference type="InterPro" id="IPR003029">
    <property type="entry name" value="S1_domain"/>
</dbReference>
<dbReference type="NCBIfam" id="TIGR03591">
    <property type="entry name" value="polynuc_phos"/>
    <property type="match status" value="1"/>
</dbReference>
<dbReference type="NCBIfam" id="TIGR02696">
    <property type="entry name" value="pppGpp_PNP"/>
    <property type="match status" value="1"/>
</dbReference>
<dbReference type="NCBIfam" id="NF008805">
    <property type="entry name" value="PRK11824.1"/>
    <property type="match status" value="1"/>
</dbReference>
<dbReference type="PANTHER" id="PTHR11252">
    <property type="entry name" value="POLYRIBONUCLEOTIDE NUCLEOTIDYLTRANSFERASE"/>
    <property type="match status" value="1"/>
</dbReference>
<dbReference type="PANTHER" id="PTHR11252:SF0">
    <property type="entry name" value="POLYRIBONUCLEOTIDE NUCLEOTIDYLTRANSFERASE 1, MITOCHONDRIAL"/>
    <property type="match status" value="1"/>
</dbReference>
<dbReference type="Pfam" id="PF00013">
    <property type="entry name" value="KH_1"/>
    <property type="match status" value="1"/>
</dbReference>
<dbReference type="Pfam" id="PF03726">
    <property type="entry name" value="PNPase"/>
    <property type="match status" value="1"/>
</dbReference>
<dbReference type="Pfam" id="PF01138">
    <property type="entry name" value="RNase_PH"/>
    <property type="match status" value="2"/>
</dbReference>
<dbReference type="Pfam" id="PF00575">
    <property type="entry name" value="S1"/>
    <property type="match status" value="1"/>
</dbReference>
<dbReference type="SMART" id="SM00322">
    <property type="entry name" value="KH"/>
    <property type="match status" value="1"/>
</dbReference>
<dbReference type="SMART" id="SM00316">
    <property type="entry name" value="S1"/>
    <property type="match status" value="1"/>
</dbReference>
<dbReference type="SUPFAM" id="SSF54791">
    <property type="entry name" value="Eukaryotic type KH-domain (KH-domain type I)"/>
    <property type="match status" value="1"/>
</dbReference>
<dbReference type="SUPFAM" id="SSF50249">
    <property type="entry name" value="Nucleic acid-binding proteins"/>
    <property type="match status" value="1"/>
</dbReference>
<dbReference type="SUPFAM" id="SSF46915">
    <property type="entry name" value="Polynucleotide phosphorylase/guanosine pentaphosphate synthase (PNPase/GPSI), domain 3"/>
    <property type="match status" value="1"/>
</dbReference>
<dbReference type="SUPFAM" id="SSF55666">
    <property type="entry name" value="Ribonuclease PH domain 2-like"/>
    <property type="match status" value="2"/>
</dbReference>
<dbReference type="SUPFAM" id="SSF54211">
    <property type="entry name" value="Ribosomal protein S5 domain 2-like"/>
    <property type="match status" value="2"/>
</dbReference>
<dbReference type="PROSITE" id="PS50084">
    <property type="entry name" value="KH_TYPE_1"/>
    <property type="match status" value="1"/>
</dbReference>
<dbReference type="PROSITE" id="PS50126">
    <property type="entry name" value="S1"/>
    <property type="match status" value="1"/>
</dbReference>
<reference key="1">
    <citation type="journal article" date="2008" name="BMC Genomics">
        <title>Comparative genomic analysis of the gut bacterium Bifidobacterium longum reveals loci susceptible to deletion during pure culture growth.</title>
        <authorList>
            <person name="Lee J.H."/>
            <person name="Karamychev V.N."/>
            <person name="Kozyavkin S.A."/>
            <person name="Mills D."/>
            <person name="Pavlov A.R."/>
            <person name="Pavlova N.V."/>
            <person name="Polouchine N.N."/>
            <person name="Richardson P.M."/>
            <person name="Shakhova V.V."/>
            <person name="Slesarev A.I."/>
            <person name="Weimer B."/>
            <person name="O'Sullivan D.J."/>
        </authorList>
    </citation>
    <scope>NUCLEOTIDE SEQUENCE [LARGE SCALE GENOMIC DNA]</scope>
    <source>
        <strain>DJO10A</strain>
    </source>
</reference>